<dbReference type="EC" id="6.1.1.14" evidence="1"/>
<dbReference type="EMBL" id="CP000800">
    <property type="protein sequence ID" value="ABV17915.1"/>
    <property type="molecule type" value="Genomic_DNA"/>
</dbReference>
<dbReference type="RefSeq" id="WP_001291771.1">
    <property type="nucleotide sequence ID" value="NC_009801.1"/>
</dbReference>
<dbReference type="SMR" id="A7ZTA5"/>
<dbReference type="GeneID" id="93778289"/>
<dbReference type="KEGG" id="ecw:EcE24377A_4054"/>
<dbReference type="HOGENOM" id="CLU_007220_2_2_6"/>
<dbReference type="Proteomes" id="UP000001122">
    <property type="component" value="Chromosome"/>
</dbReference>
<dbReference type="GO" id="GO:0005829">
    <property type="term" value="C:cytosol"/>
    <property type="evidence" value="ECO:0007669"/>
    <property type="project" value="TreeGrafter"/>
</dbReference>
<dbReference type="GO" id="GO:0004814">
    <property type="term" value="F:arginine-tRNA ligase activity"/>
    <property type="evidence" value="ECO:0007669"/>
    <property type="project" value="InterPro"/>
</dbReference>
<dbReference type="GO" id="GO:0005524">
    <property type="term" value="F:ATP binding"/>
    <property type="evidence" value="ECO:0007669"/>
    <property type="project" value="UniProtKB-UniRule"/>
</dbReference>
<dbReference type="GO" id="GO:0004820">
    <property type="term" value="F:glycine-tRNA ligase activity"/>
    <property type="evidence" value="ECO:0007669"/>
    <property type="project" value="UniProtKB-UniRule"/>
</dbReference>
<dbReference type="GO" id="GO:0006420">
    <property type="term" value="P:arginyl-tRNA aminoacylation"/>
    <property type="evidence" value="ECO:0007669"/>
    <property type="project" value="InterPro"/>
</dbReference>
<dbReference type="GO" id="GO:0006426">
    <property type="term" value="P:glycyl-tRNA aminoacylation"/>
    <property type="evidence" value="ECO:0007669"/>
    <property type="project" value="UniProtKB-UniRule"/>
</dbReference>
<dbReference type="HAMAP" id="MF_00255">
    <property type="entry name" value="Gly_tRNA_synth_beta"/>
    <property type="match status" value="1"/>
</dbReference>
<dbReference type="InterPro" id="IPR008909">
    <property type="entry name" value="DALR_anticod-bd"/>
</dbReference>
<dbReference type="InterPro" id="IPR015944">
    <property type="entry name" value="Gly-tRNA-synth_bsu"/>
</dbReference>
<dbReference type="InterPro" id="IPR006194">
    <property type="entry name" value="Gly-tRNA-synth_heterodimer"/>
</dbReference>
<dbReference type="NCBIfam" id="TIGR00211">
    <property type="entry name" value="glyS"/>
    <property type="match status" value="1"/>
</dbReference>
<dbReference type="PANTHER" id="PTHR30075:SF2">
    <property type="entry name" value="GLYCINE--TRNA LIGASE, CHLOROPLASTIC_MITOCHONDRIAL 2"/>
    <property type="match status" value="1"/>
</dbReference>
<dbReference type="PANTHER" id="PTHR30075">
    <property type="entry name" value="GLYCYL-TRNA SYNTHETASE"/>
    <property type="match status" value="1"/>
</dbReference>
<dbReference type="Pfam" id="PF05746">
    <property type="entry name" value="DALR_1"/>
    <property type="match status" value="1"/>
</dbReference>
<dbReference type="Pfam" id="PF02092">
    <property type="entry name" value="tRNA_synt_2f"/>
    <property type="match status" value="1"/>
</dbReference>
<dbReference type="PRINTS" id="PR01045">
    <property type="entry name" value="TRNASYNTHGB"/>
</dbReference>
<dbReference type="SUPFAM" id="SSF109604">
    <property type="entry name" value="HD-domain/PDEase-like"/>
    <property type="match status" value="1"/>
</dbReference>
<dbReference type="PROSITE" id="PS50861">
    <property type="entry name" value="AA_TRNA_LIGASE_II_GLYAB"/>
    <property type="match status" value="1"/>
</dbReference>
<accession>A7ZTA5</accession>
<reference key="1">
    <citation type="journal article" date="2008" name="J. Bacteriol.">
        <title>The pangenome structure of Escherichia coli: comparative genomic analysis of E. coli commensal and pathogenic isolates.</title>
        <authorList>
            <person name="Rasko D.A."/>
            <person name="Rosovitz M.J."/>
            <person name="Myers G.S.A."/>
            <person name="Mongodin E.F."/>
            <person name="Fricke W.F."/>
            <person name="Gajer P."/>
            <person name="Crabtree J."/>
            <person name="Sebaihia M."/>
            <person name="Thomson N.R."/>
            <person name="Chaudhuri R."/>
            <person name="Henderson I.R."/>
            <person name="Sperandio V."/>
            <person name="Ravel J."/>
        </authorList>
    </citation>
    <scope>NUCLEOTIDE SEQUENCE [LARGE SCALE GENOMIC DNA]</scope>
    <source>
        <strain>E24377A / ETEC</strain>
    </source>
</reference>
<name>SYGB_ECO24</name>
<evidence type="ECO:0000255" key="1">
    <source>
        <dbReference type="HAMAP-Rule" id="MF_00255"/>
    </source>
</evidence>
<proteinExistence type="inferred from homology"/>
<organism>
    <name type="scientific">Escherichia coli O139:H28 (strain E24377A / ETEC)</name>
    <dbReference type="NCBI Taxonomy" id="331111"/>
    <lineage>
        <taxon>Bacteria</taxon>
        <taxon>Pseudomonadati</taxon>
        <taxon>Pseudomonadota</taxon>
        <taxon>Gammaproteobacteria</taxon>
        <taxon>Enterobacterales</taxon>
        <taxon>Enterobacteriaceae</taxon>
        <taxon>Escherichia</taxon>
    </lineage>
</organism>
<protein>
    <recommendedName>
        <fullName evidence="1">Glycine--tRNA ligase beta subunit</fullName>
        <ecNumber evidence="1">6.1.1.14</ecNumber>
    </recommendedName>
    <alternativeName>
        <fullName evidence="1">Glycyl-tRNA synthetase beta subunit</fullName>
        <shortName evidence="1">GlyRS</shortName>
    </alternativeName>
</protein>
<feature type="chain" id="PRO_1000059059" description="Glycine--tRNA ligase beta subunit">
    <location>
        <begin position="1"/>
        <end position="689"/>
    </location>
</feature>
<comment type="catalytic activity">
    <reaction evidence="1">
        <text>tRNA(Gly) + glycine + ATP = glycyl-tRNA(Gly) + AMP + diphosphate</text>
        <dbReference type="Rhea" id="RHEA:16013"/>
        <dbReference type="Rhea" id="RHEA-COMP:9664"/>
        <dbReference type="Rhea" id="RHEA-COMP:9683"/>
        <dbReference type="ChEBI" id="CHEBI:30616"/>
        <dbReference type="ChEBI" id="CHEBI:33019"/>
        <dbReference type="ChEBI" id="CHEBI:57305"/>
        <dbReference type="ChEBI" id="CHEBI:78442"/>
        <dbReference type="ChEBI" id="CHEBI:78522"/>
        <dbReference type="ChEBI" id="CHEBI:456215"/>
        <dbReference type="EC" id="6.1.1.14"/>
    </reaction>
</comment>
<comment type="subunit">
    <text evidence="1">Tetramer of two alpha and two beta subunits.</text>
</comment>
<comment type="subcellular location">
    <subcellularLocation>
        <location evidence="1">Cytoplasm</location>
    </subcellularLocation>
</comment>
<comment type="similarity">
    <text evidence="1">Belongs to the class-II aminoacyl-tRNA synthetase family.</text>
</comment>
<sequence>MSEKTFLVEIGTEELPPKALRSLAESFAANFTAELDNAGLAHGTVQWFAAPRRLALKVANLAEAQPDREIEKRGPAIAQAFDAEGKPSKAAEGWARGCGITVDQAERLTTDKGEWLLYRAHVKGESTEALLPNMVATSLAKLPIPKLMRWGASDVHFVRPVHTVTLLLGDKVIPATILGIQSDRVIRGHRFMGEPEFTIDNADQYPEILRERGKVIADYEERKAKIKADAEEAARKIGGNADLSESLLEEVASLVEWPVVLTAKFEEKFLAVPAEALVYTMKGDQKYFPVYANDGKLLPNFIFVANIESKDPQQIISGNEKVVRPRLADAEFFFNTDRKKRLEDNLPRLQTVLFQQQLGTLRDKTDRIQALAGWIAEQIGADVNHATRAGLLSKCDLMTNMVFEFTDTQGVMGMHYARHDGEAEDVAVALNEQYQPRFAGDDLPSNPVACALAIADKMDTLAGIFGIGQHPKGDKDPFALRRAALGVLRIIVEKNLNLDLQTLTEEAVRLYGDKLTNANVVDDVIDFMLGRFRAWYQDEGYTVDTIQAVLARRPTRPADFDARMKAVSHFRTLDAAAALAAANKRVSNILAKSDEVLSDRVNASTLKEPEEIKLAMQVVVLRDKLEPYFAEGRYQDALVELAELREPVDAFFDKVMVMVDDKELRLNRLTMLEKLRELFLRVADISLLQ</sequence>
<gene>
    <name evidence="1" type="primary">glyS</name>
    <name type="ordered locus">EcE24377A_4054</name>
</gene>
<keyword id="KW-0030">Aminoacyl-tRNA synthetase</keyword>
<keyword id="KW-0067">ATP-binding</keyword>
<keyword id="KW-0963">Cytoplasm</keyword>
<keyword id="KW-0436">Ligase</keyword>
<keyword id="KW-0547">Nucleotide-binding</keyword>
<keyword id="KW-0648">Protein biosynthesis</keyword>
<keyword id="KW-1185">Reference proteome</keyword>